<accession>B7XHC1</accession>
<feature type="chain" id="PRO_0000388400" description="Probable tyrosine--tRNA ligase, cytoplasmic">
    <location>
        <begin position="1"/>
        <end position="342"/>
    </location>
</feature>
<feature type="short sequence motif" description="'HIGH' region" evidence="1">
    <location>
        <begin position="53"/>
        <end position="61"/>
    </location>
</feature>
<feature type="short sequence motif" description="'KMSKS' region" evidence="1">
    <location>
        <begin position="231"/>
        <end position="235"/>
    </location>
</feature>
<feature type="binding site" evidence="1">
    <location>
        <position position="48"/>
    </location>
    <ligand>
        <name>L-tyrosine</name>
        <dbReference type="ChEBI" id="CHEBI:58315"/>
    </ligand>
</feature>
<feature type="binding site" evidence="1">
    <location>
        <position position="175"/>
    </location>
    <ligand>
        <name>L-tyrosine</name>
        <dbReference type="ChEBI" id="CHEBI:58315"/>
    </ligand>
</feature>
<feature type="binding site" evidence="1">
    <location>
        <position position="179"/>
    </location>
    <ligand>
        <name>L-tyrosine</name>
        <dbReference type="ChEBI" id="CHEBI:58315"/>
    </ligand>
</feature>
<feature type="binding site" evidence="1">
    <location>
        <position position="182"/>
    </location>
    <ligand>
        <name>L-tyrosine</name>
        <dbReference type="ChEBI" id="CHEBI:58315"/>
    </ligand>
</feature>
<feature type="binding site" evidence="1">
    <location>
        <position position="197"/>
    </location>
    <ligand>
        <name>L-tyrosine</name>
        <dbReference type="ChEBI" id="CHEBI:58315"/>
    </ligand>
</feature>
<sequence length="342" mass="40043">MDETSIINENTDVFEKKITLIERNLQEITINDKEIIRKIIRKRNLKIYWGTAITGKPHIGYFLPILKIKDFVEAECEVTILFADIHGFLDNLKAPIELIENRYHYYEKIIKIMLMSVGCDINKIRFVKGSDYQKNSDYVFDLYKLCSYTTERDCKRAGSDVVKQRDNVLLSSLIYPNMQALDEEYLKVDAQFGGEDQRKIFMHAKTFLPKLGYKKRIHLMNPMMPGLNSDKMSSSDELSKIDLLDTEQQINKKINKCFCEEGNLQSGVLHVFEFVIFHYYTSISINKKSYTSIEDVKKDFEMKLIHPKDLKLACSNYINKMVTPIRNEMLKDIDMIKKAYNN</sequence>
<reference key="1">
    <citation type="journal article" date="2007" name="PLoS ONE">
        <title>Patterns of genome evolution among the microsporidian parasites Encephalitozoon cuniculi, Antonospora locustae and Enterocytozoon bieneusi.</title>
        <authorList>
            <person name="Corradi N."/>
            <person name="Akiyoshi D.E."/>
            <person name="Morrison H.G."/>
            <person name="Feng X."/>
            <person name="Weiss L.M."/>
            <person name="Tzipori S."/>
            <person name="Keeling P.J."/>
        </authorList>
    </citation>
    <scope>NUCLEOTIDE SEQUENCE [LARGE SCALE GENOMIC DNA]</scope>
    <source>
        <strain>H348</strain>
    </source>
</reference>
<reference key="2">
    <citation type="journal article" date="2009" name="PLoS Pathog.">
        <title>Genomic survey of the non-cultivatable opportunistic human pathogen, Enterocytozoon bieneusi.</title>
        <authorList>
            <person name="Akiyoshi D.E."/>
            <person name="Morrison H.G."/>
            <person name="Lei S."/>
            <person name="Feng X."/>
            <person name="Zhang Q."/>
            <person name="Corradi N."/>
            <person name="Mayanja H."/>
            <person name="Tumwine J.K."/>
            <person name="Keeling P.J."/>
            <person name="Weiss L.M."/>
            <person name="Tzipori S."/>
        </authorList>
    </citation>
    <scope>NUCLEOTIDE SEQUENCE [LARGE SCALE GENOMIC DNA]</scope>
    <source>
        <strain>H348</strain>
    </source>
</reference>
<comment type="catalytic activity">
    <reaction>
        <text>tRNA(Tyr) + L-tyrosine + ATP = L-tyrosyl-tRNA(Tyr) + AMP + diphosphate + H(+)</text>
        <dbReference type="Rhea" id="RHEA:10220"/>
        <dbReference type="Rhea" id="RHEA-COMP:9706"/>
        <dbReference type="Rhea" id="RHEA-COMP:9707"/>
        <dbReference type="ChEBI" id="CHEBI:15378"/>
        <dbReference type="ChEBI" id="CHEBI:30616"/>
        <dbReference type="ChEBI" id="CHEBI:33019"/>
        <dbReference type="ChEBI" id="CHEBI:58315"/>
        <dbReference type="ChEBI" id="CHEBI:78442"/>
        <dbReference type="ChEBI" id="CHEBI:78536"/>
        <dbReference type="ChEBI" id="CHEBI:456215"/>
        <dbReference type="EC" id="6.1.1.1"/>
    </reaction>
</comment>
<comment type="subunit">
    <text evidence="1">Homodimer.</text>
</comment>
<comment type="subcellular location">
    <subcellularLocation>
        <location evidence="1">Cytoplasm</location>
    </subcellularLocation>
</comment>
<comment type="similarity">
    <text evidence="2">Belongs to the class-I aminoacyl-tRNA synthetase family.</text>
</comment>
<gene>
    <name type="ORF">EBI_24879</name>
</gene>
<evidence type="ECO:0000250" key="1"/>
<evidence type="ECO:0000305" key="2"/>
<dbReference type="EC" id="6.1.1.1"/>
<dbReference type="EMBL" id="ABGB01000014">
    <property type="protein sequence ID" value="EED44629.1"/>
    <property type="molecule type" value="Genomic_DNA"/>
</dbReference>
<dbReference type="RefSeq" id="XP_002649399.1">
    <property type="nucleotide sequence ID" value="XM_002649353.1"/>
</dbReference>
<dbReference type="SMR" id="B7XHC1"/>
<dbReference type="FunCoup" id="B7XHC1">
    <property type="interactions" value="270"/>
</dbReference>
<dbReference type="STRING" id="481877.B7XHC1"/>
<dbReference type="VEuPathDB" id="MicrosporidiaDB:EBI_24879"/>
<dbReference type="HOGENOM" id="CLU_035267_0_1_1"/>
<dbReference type="InParanoid" id="B7XHC1"/>
<dbReference type="OMA" id="VMPKLGY"/>
<dbReference type="OrthoDB" id="197206at2759"/>
<dbReference type="GO" id="GO:0005737">
    <property type="term" value="C:cytoplasm"/>
    <property type="evidence" value="ECO:0007669"/>
    <property type="project" value="UniProtKB-SubCell"/>
</dbReference>
<dbReference type="GO" id="GO:0005524">
    <property type="term" value="F:ATP binding"/>
    <property type="evidence" value="ECO:0007669"/>
    <property type="project" value="UniProtKB-KW"/>
</dbReference>
<dbReference type="GO" id="GO:0004831">
    <property type="term" value="F:tyrosine-tRNA ligase activity"/>
    <property type="evidence" value="ECO:0007669"/>
    <property type="project" value="UniProtKB-EC"/>
</dbReference>
<dbReference type="GO" id="GO:0006437">
    <property type="term" value="P:tyrosyl-tRNA aminoacylation"/>
    <property type="evidence" value="ECO:0007669"/>
    <property type="project" value="InterPro"/>
</dbReference>
<dbReference type="FunFam" id="3.40.50.620:FF:000040">
    <property type="entry name" value="Tyrosine--tRNA ligase"/>
    <property type="match status" value="1"/>
</dbReference>
<dbReference type="Gene3D" id="3.40.50.620">
    <property type="entry name" value="HUPs"/>
    <property type="match status" value="1"/>
</dbReference>
<dbReference type="Gene3D" id="1.10.240.10">
    <property type="entry name" value="Tyrosyl-Transfer RNA Synthetase"/>
    <property type="match status" value="1"/>
</dbReference>
<dbReference type="InterPro" id="IPR002305">
    <property type="entry name" value="aa-tRNA-synth_Ic"/>
</dbReference>
<dbReference type="InterPro" id="IPR014729">
    <property type="entry name" value="Rossmann-like_a/b/a_fold"/>
</dbReference>
<dbReference type="InterPro" id="IPR002307">
    <property type="entry name" value="Tyr-tRNA-ligase"/>
</dbReference>
<dbReference type="InterPro" id="IPR023617">
    <property type="entry name" value="Tyr-tRNA-ligase_arc/euk-type"/>
</dbReference>
<dbReference type="InterPro" id="IPR050489">
    <property type="entry name" value="Tyr-tRNA_synthase"/>
</dbReference>
<dbReference type="NCBIfam" id="NF006330">
    <property type="entry name" value="PRK08560.1"/>
    <property type="match status" value="1"/>
</dbReference>
<dbReference type="NCBIfam" id="TIGR00234">
    <property type="entry name" value="tyrS"/>
    <property type="match status" value="1"/>
</dbReference>
<dbReference type="PANTHER" id="PTHR46264:SF4">
    <property type="entry name" value="TYROSINE--TRNA LIGASE, CYTOPLASMIC"/>
    <property type="match status" value="1"/>
</dbReference>
<dbReference type="PANTHER" id="PTHR46264">
    <property type="entry name" value="TYROSINE-TRNA LIGASE"/>
    <property type="match status" value="1"/>
</dbReference>
<dbReference type="Pfam" id="PF00579">
    <property type="entry name" value="tRNA-synt_1b"/>
    <property type="match status" value="1"/>
</dbReference>
<dbReference type="PIRSF" id="PIRSF006588">
    <property type="entry name" value="TyrRS_arch_euk"/>
    <property type="match status" value="1"/>
</dbReference>
<dbReference type="PRINTS" id="PR01040">
    <property type="entry name" value="TRNASYNTHTYR"/>
</dbReference>
<dbReference type="SUPFAM" id="SSF52374">
    <property type="entry name" value="Nucleotidylyl transferase"/>
    <property type="match status" value="1"/>
</dbReference>
<name>SYYC_ENTBH</name>
<organism>
    <name type="scientific">Enterocytozoon bieneusi (strain H348)</name>
    <name type="common">Microsporidian parasite</name>
    <dbReference type="NCBI Taxonomy" id="481877"/>
    <lineage>
        <taxon>Eukaryota</taxon>
        <taxon>Fungi</taxon>
        <taxon>Fungi incertae sedis</taxon>
        <taxon>Microsporidia</taxon>
        <taxon>Enterocytozoonidae</taxon>
        <taxon>Enterocytozoon</taxon>
    </lineage>
</organism>
<keyword id="KW-0030">Aminoacyl-tRNA synthetase</keyword>
<keyword id="KW-0067">ATP-binding</keyword>
<keyword id="KW-0963">Cytoplasm</keyword>
<keyword id="KW-0436">Ligase</keyword>
<keyword id="KW-0547">Nucleotide-binding</keyword>
<keyword id="KW-0648">Protein biosynthesis</keyword>
<proteinExistence type="inferred from homology"/>
<protein>
    <recommendedName>
        <fullName>Probable tyrosine--tRNA ligase, cytoplasmic</fullName>
        <ecNumber>6.1.1.1</ecNumber>
    </recommendedName>
    <alternativeName>
        <fullName>Tyrosyl-tRNA synthetase</fullName>
        <shortName>TyrRS</shortName>
    </alternativeName>
</protein>